<name>ESSA_STAAS</name>
<reference key="1">
    <citation type="journal article" date="2004" name="Proc. Natl. Acad. Sci. U.S.A.">
        <title>Complete genomes of two clinical Staphylococcus aureus strains: evidence for the rapid evolution of virulence and drug resistance.</title>
        <authorList>
            <person name="Holden M.T.G."/>
            <person name="Feil E.J."/>
            <person name="Lindsay J.A."/>
            <person name="Peacock S.J."/>
            <person name="Day N.P.J."/>
            <person name="Enright M.C."/>
            <person name="Foster T.J."/>
            <person name="Moore C.E."/>
            <person name="Hurst L."/>
            <person name="Atkin R."/>
            <person name="Barron A."/>
            <person name="Bason N."/>
            <person name="Bentley S.D."/>
            <person name="Chillingworth C."/>
            <person name="Chillingworth T."/>
            <person name="Churcher C."/>
            <person name="Clark L."/>
            <person name="Corton C."/>
            <person name="Cronin A."/>
            <person name="Doggett J."/>
            <person name="Dowd L."/>
            <person name="Feltwell T."/>
            <person name="Hance Z."/>
            <person name="Harris B."/>
            <person name="Hauser H."/>
            <person name="Holroyd S."/>
            <person name="Jagels K."/>
            <person name="James K.D."/>
            <person name="Lennard N."/>
            <person name="Line A."/>
            <person name="Mayes R."/>
            <person name="Moule S."/>
            <person name="Mungall K."/>
            <person name="Ormond D."/>
            <person name="Quail M.A."/>
            <person name="Rabbinowitsch E."/>
            <person name="Rutherford K.M."/>
            <person name="Sanders M."/>
            <person name="Sharp S."/>
            <person name="Simmonds M."/>
            <person name="Stevens K."/>
            <person name="Whitehead S."/>
            <person name="Barrell B.G."/>
            <person name="Spratt B.G."/>
            <person name="Parkhill J."/>
        </authorList>
    </citation>
    <scope>NUCLEOTIDE SEQUENCE [LARGE SCALE GENOMIC DNA]</scope>
    <source>
        <strain>MSSA476</strain>
    </source>
</reference>
<gene>
    <name evidence="1" type="primary">essA</name>
    <name type="ordered locus">SAS0260</name>
</gene>
<sequence length="152" mass="17393">MLMNSVIALTFLTASSNNGGLNIDVQQEEEKRINNDLNQYDTTLFNKDSKAVNDAIAKQKKERQQQIKNDMFQNQASHSTRLNETKKVLFSKSNLEKTSESDKSPYIQNKQEKKIFPYILMSVGAFLTLGFVIFSIHKGRRTKNESARKSNI</sequence>
<accession>Q6GCI8</accession>
<feature type="chain" id="PRO_0000019573" description="ESAT-6 secretion machinery protein EssA">
    <location>
        <begin position="1"/>
        <end position="152"/>
    </location>
</feature>
<feature type="topological domain" description="Cytoplasmic" evidence="1">
    <location>
        <begin position="1"/>
        <end position="114"/>
    </location>
</feature>
<feature type="transmembrane region" description="Helical" evidence="2">
    <location>
        <begin position="115"/>
        <end position="135"/>
    </location>
</feature>
<feature type="topological domain" description="Extracellular" evidence="1">
    <location>
        <begin position="136"/>
        <end position="152"/>
    </location>
</feature>
<feature type="region of interest" description="Disordered" evidence="3">
    <location>
        <begin position="62"/>
        <end position="83"/>
    </location>
</feature>
<feature type="compositionally biased region" description="Polar residues" evidence="3">
    <location>
        <begin position="66"/>
        <end position="80"/>
    </location>
</feature>
<organism>
    <name type="scientific">Staphylococcus aureus (strain MSSA476)</name>
    <dbReference type="NCBI Taxonomy" id="282459"/>
    <lineage>
        <taxon>Bacteria</taxon>
        <taxon>Bacillati</taxon>
        <taxon>Bacillota</taxon>
        <taxon>Bacilli</taxon>
        <taxon>Bacillales</taxon>
        <taxon>Staphylococcaceae</taxon>
        <taxon>Staphylococcus</taxon>
    </lineage>
</organism>
<protein>
    <recommendedName>
        <fullName evidence="1">ESAT-6 secretion machinery protein EssA</fullName>
    </recommendedName>
</protein>
<proteinExistence type="inferred from homology"/>
<evidence type="ECO:0000250" key="1">
    <source>
        <dbReference type="UniProtKB" id="P0C052"/>
    </source>
</evidence>
<evidence type="ECO:0000255" key="2"/>
<evidence type="ECO:0000256" key="3">
    <source>
        <dbReference type="SAM" id="MobiDB-lite"/>
    </source>
</evidence>
<evidence type="ECO:0000305" key="4"/>
<comment type="function">
    <text evidence="1">Component of the ESAT-6 secretion system (Ess). Required for the secretion of EsxA and EsxB.</text>
</comment>
<comment type="subcellular location">
    <subcellularLocation>
        <location evidence="1">Cell membrane</location>
        <topology evidence="2">Single-pass type I membrane protein</topology>
    </subcellularLocation>
</comment>
<comment type="similarity">
    <text evidence="4">Belongs to the EssA family.</text>
</comment>
<keyword id="KW-1003">Cell membrane</keyword>
<keyword id="KW-0472">Membrane</keyword>
<keyword id="KW-0812">Transmembrane</keyword>
<keyword id="KW-1133">Transmembrane helix</keyword>
<keyword id="KW-0843">Virulence</keyword>
<dbReference type="EMBL" id="BX571857">
    <property type="protein sequence ID" value="CAG42031.1"/>
    <property type="molecule type" value="Genomic_DNA"/>
</dbReference>
<dbReference type="RefSeq" id="WP_000928935.1">
    <property type="nucleotide sequence ID" value="NC_002953.3"/>
</dbReference>
<dbReference type="KEGG" id="sas:SAS0260"/>
<dbReference type="HOGENOM" id="CLU_144832_0_0_9"/>
<dbReference type="GO" id="GO:0005886">
    <property type="term" value="C:plasma membrane"/>
    <property type="evidence" value="ECO:0007669"/>
    <property type="project" value="UniProtKB-SubCell"/>
</dbReference>
<dbReference type="InterPro" id="IPR034026">
    <property type="entry name" value="EssA"/>
</dbReference>
<dbReference type="InterPro" id="IPR018920">
    <property type="entry name" value="EssA/YueC"/>
</dbReference>
<dbReference type="NCBIfam" id="TIGR03927">
    <property type="entry name" value="T7SS_EssA_Firm"/>
    <property type="match status" value="1"/>
</dbReference>
<dbReference type="Pfam" id="PF10661">
    <property type="entry name" value="EssA"/>
    <property type="match status" value="1"/>
</dbReference>